<accession>Q086A4</accession>
<proteinExistence type="inferred from homology"/>
<reference key="1">
    <citation type="submission" date="2006-08" db="EMBL/GenBank/DDBJ databases">
        <title>Complete sequence of Shewanella frigidimarina NCIMB 400.</title>
        <authorList>
            <consortium name="US DOE Joint Genome Institute"/>
            <person name="Copeland A."/>
            <person name="Lucas S."/>
            <person name="Lapidus A."/>
            <person name="Barry K."/>
            <person name="Detter J.C."/>
            <person name="Glavina del Rio T."/>
            <person name="Hammon N."/>
            <person name="Israni S."/>
            <person name="Dalin E."/>
            <person name="Tice H."/>
            <person name="Pitluck S."/>
            <person name="Fredrickson J.K."/>
            <person name="Kolker E."/>
            <person name="McCuel L.A."/>
            <person name="DiChristina T."/>
            <person name="Nealson K.H."/>
            <person name="Newman D."/>
            <person name="Tiedje J.M."/>
            <person name="Zhou J."/>
            <person name="Romine M.F."/>
            <person name="Culley D.E."/>
            <person name="Serres M."/>
            <person name="Chertkov O."/>
            <person name="Brettin T."/>
            <person name="Bruce D."/>
            <person name="Han C."/>
            <person name="Tapia R."/>
            <person name="Gilna P."/>
            <person name="Schmutz J."/>
            <person name="Larimer F."/>
            <person name="Land M."/>
            <person name="Hauser L."/>
            <person name="Kyrpides N."/>
            <person name="Mikhailova N."/>
            <person name="Richardson P."/>
        </authorList>
    </citation>
    <scope>NUCLEOTIDE SEQUENCE [LARGE SCALE GENOMIC DNA]</scope>
    <source>
        <strain>NCIMB 400</strain>
    </source>
</reference>
<feature type="chain" id="PRO_1000093284" description="Protein-L-isoaspartate O-methyltransferase">
    <location>
        <begin position="1"/>
        <end position="211"/>
    </location>
</feature>
<feature type="active site" evidence="1">
    <location>
        <position position="62"/>
    </location>
</feature>
<sequence length="211" mass="22963">MTRVASTSAMNLAKKLAEAGIRHPAVLHAVATTPRELFLDGALAHKAYENTALPIGQGQTISQPYIVARMTELLLQHNPQKVLEIGTGSGYQAAVLASLIPELFTIERIKALQIQARQRLKRLDLHNVAFKYGDGWQGWSNRGPFDGIMVTAAAATVPQALLEQLSEHGVLIIPVGEDTQQLLKITRIGQTFQSEIIEAVKFVPLINGDLA</sequence>
<keyword id="KW-0963">Cytoplasm</keyword>
<keyword id="KW-0489">Methyltransferase</keyword>
<keyword id="KW-1185">Reference proteome</keyword>
<keyword id="KW-0949">S-adenosyl-L-methionine</keyword>
<keyword id="KW-0808">Transferase</keyword>
<comment type="function">
    <text evidence="1">Catalyzes the methyl esterification of L-isoaspartyl residues in peptides and proteins that result from spontaneous decomposition of normal L-aspartyl and L-asparaginyl residues. It plays a role in the repair and/or degradation of damaged proteins.</text>
</comment>
<comment type="catalytic activity">
    <reaction evidence="1">
        <text>[protein]-L-isoaspartate + S-adenosyl-L-methionine = [protein]-L-isoaspartate alpha-methyl ester + S-adenosyl-L-homocysteine</text>
        <dbReference type="Rhea" id="RHEA:12705"/>
        <dbReference type="Rhea" id="RHEA-COMP:12143"/>
        <dbReference type="Rhea" id="RHEA-COMP:12144"/>
        <dbReference type="ChEBI" id="CHEBI:57856"/>
        <dbReference type="ChEBI" id="CHEBI:59789"/>
        <dbReference type="ChEBI" id="CHEBI:90596"/>
        <dbReference type="ChEBI" id="CHEBI:90598"/>
        <dbReference type="EC" id="2.1.1.77"/>
    </reaction>
</comment>
<comment type="subcellular location">
    <subcellularLocation>
        <location evidence="1">Cytoplasm</location>
    </subcellularLocation>
</comment>
<comment type="similarity">
    <text evidence="1">Belongs to the methyltransferase superfamily. L-isoaspartyl/D-aspartyl protein methyltransferase family.</text>
</comment>
<protein>
    <recommendedName>
        <fullName evidence="1">Protein-L-isoaspartate O-methyltransferase</fullName>
        <ecNumber evidence="1">2.1.1.77</ecNumber>
    </recommendedName>
    <alternativeName>
        <fullName evidence="1">L-isoaspartyl protein carboxyl methyltransferase</fullName>
    </alternativeName>
    <alternativeName>
        <fullName evidence="1">Protein L-isoaspartyl methyltransferase</fullName>
    </alternativeName>
    <alternativeName>
        <fullName evidence="1">Protein-beta-aspartate methyltransferase</fullName>
        <shortName evidence="1">PIMT</shortName>
    </alternativeName>
</protein>
<organism>
    <name type="scientific">Shewanella frigidimarina (strain NCIMB 400)</name>
    <dbReference type="NCBI Taxonomy" id="318167"/>
    <lineage>
        <taxon>Bacteria</taxon>
        <taxon>Pseudomonadati</taxon>
        <taxon>Pseudomonadota</taxon>
        <taxon>Gammaproteobacteria</taxon>
        <taxon>Alteromonadales</taxon>
        <taxon>Shewanellaceae</taxon>
        <taxon>Shewanella</taxon>
    </lineage>
</organism>
<name>PIMT_SHEFN</name>
<gene>
    <name evidence="1" type="primary">pcm</name>
    <name type="ordered locus">Sfri_1058</name>
</gene>
<dbReference type="EC" id="2.1.1.77" evidence="1"/>
<dbReference type="EMBL" id="CP000447">
    <property type="protein sequence ID" value="ABI70911.1"/>
    <property type="molecule type" value="Genomic_DNA"/>
</dbReference>
<dbReference type="RefSeq" id="WP_011636532.1">
    <property type="nucleotide sequence ID" value="NC_008345.1"/>
</dbReference>
<dbReference type="SMR" id="Q086A4"/>
<dbReference type="STRING" id="318167.Sfri_1058"/>
<dbReference type="KEGG" id="sfr:Sfri_1058"/>
<dbReference type="eggNOG" id="COG2518">
    <property type="taxonomic scope" value="Bacteria"/>
</dbReference>
<dbReference type="HOGENOM" id="CLU_055432_2_0_6"/>
<dbReference type="OrthoDB" id="9810066at2"/>
<dbReference type="Proteomes" id="UP000000684">
    <property type="component" value="Chromosome"/>
</dbReference>
<dbReference type="GO" id="GO:0005737">
    <property type="term" value="C:cytoplasm"/>
    <property type="evidence" value="ECO:0007669"/>
    <property type="project" value="UniProtKB-SubCell"/>
</dbReference>
<dbReference type="GO" id="GO:0004719">
    <property type="term" value="F:protein-L-isoaspartate (D-aspartate) O-methyltransferase activity"/>
    <property type="evidence" value="ECO:0007669"/>
    <property type="project" value="UniProtKB-UniRule"/>
</dbReference>
<dbReference type="GO" id="GO:0032259">
    <property type="term" value="P:methylation"/>
    <property type="evidence" value="ECO:0007669"/>
    <property type="project" value="UniProtKB-KW"/>
</dbReference>
<dbReference type="GO" id="GO:0036211">
    <property type="term" value="P:protein modification process"/>
    <property type="evidence" value="ECO:0007669"/>
    <property type="project" value="UniProtKB-UniRule"/>
</dbReference>
<dbReference type="GO" id="GO:0030091">
    <property type="term" value="P:protein repair"/>
    <property type="evidence" value="ECO:0007669"/>
    <property type="project" value="UniProtKB-UniRule"/>
</dbReference>
<dbReference type="CDD" id="cd02440">
    <property type="entry name" value="AdoMet_MTases"/>
    <property type="match status" value="1"/>
</dbReference>
<dbReference type="FunFam" id="3.40.50.150:FF:000010">
    <property type="entry name" value="Protein-L-isoaspartate O-methyltransferase"/>
    <property type="match status" value="1"/>
</dbReference>
<dbReference type="Gene3D" id="3.40.50.150">
    <property type="entry name" value="Vaccinia Virus protein VP39"/>
    <property type="match status" value="1"/>
</dbReference>
<dbReference type="HAMAP" id="MF_00090">
    <property type="entry name" value="PIMT"/>
    <property type="match status" value="1"/>
</dbReference>
<dbReference type="InterPro" id="IPR000682">
    <property type="entry name" value="PCMT"/>
</dbReference>
<dbReference type="InterPro" id="IPR029063">
    <property type="entry name" value="SAM-dependent_MTases_sf"/>
</dbReference>
<dbReference type="NCBIfam" id="TIGR00080">
    <property type="entry name" value="pimt"/>
    <property type="match status" value="1"/>
</dbReference>
<dbReference type="NCBIfam" id="NF001453">
    <property type="entry name" value="PRK00312.1"/>
    <property type="match status" value="1"/>
</dbReference>
<dbReference type="PANTHER" id="PTHR11579">
    <property type="entry name" value="PROTEIN-L-ISOASPARTATE O-METHYLTRANSFERASE"/>
    <property type="match status" value="1"/>
</dbReference>
<dbReference type="PANTHER" id="PTHR11579:SF0">
    <property type="entry name" value="PROTEIN-L-ISOASPARTATE(D-ASPARTATE) O-METHYLTRANSFERASE"/>
    <property type="match status" value="1"/>
</dbReference>
<dbReference type="Pfam" id="PF01135">
    <property type="entry name" value="PCMT"/>
    <property type="match status" value="1"/>
</dbReference>
<dbReference type="SUPFAM" id="SSF53335">
    <property type="entry name" value="S-adenosyl-L-methionine-dependent methyltransferases"/>
    <property type="match status" value="1"/>
</dbReference>
<dbReference type="PROSITE" id="PS01279">
    <property type="entry name" value="PCMT"/>
    <property type="match status" value="1"/>
</dbReference>
<evidence type="ECO:0000255" key="1">
    <source>
        <dbReference type="HAMAP-Rule" id="MF_00090"/>
    </source>
</evidence>